<proteinExistence type="inferred from homology"/>
<evidence type="ECO:0000250" key="1"/>
<evidence type="ECO:0000255" key="2"/>
<evidence type="ECO:0000255" key="3">
    <source>
        <dbReference type="PROSITE-ProRule" id="PRU00153"/>
    </source>
</evidence>
<evidence type="ECO:0000305" key="4"/>
<accession>Q4UJZ1</accession>
<gene>
    <name type="primary">pld</name>
    <name type="ordered locus">RF_1297</name>
</gene>
<sequence>MKRKNNKFIEISIAFILGVALGIYGQNPDYFTNLINQKSLASSAPKIKHYNISELLRSKVSTCFTPPAGCTKFIANQIDRAEESIYMQAYGMSDALITTALINAQMRGVKVRILLDRSNLKQKFSKLHELQRAKIDVGIDKVPGIAHNKVIIIDRKKVITGSFNFTAAADKRNAENVIIIEDRELAESYLQNWLNRKASN</sequence>
<protein>
    <recommendedName>
        <fullName>Phospholipase D</fullName>
        <shortName>PLD</shortName>
        <ecNumber>3.1.4.4</ecNumber>
    </recommendedName>
    <alternativeName>
        <fullName>Choline phosphatase</fullName>
    </alternativeName>
</protein>
<organism>
    <name type="scientific">Rickettsia felis (strain ATCC VR-1525 / URRWXCal2)</name>
    <name type="common">Rickettsia azadi</name>
    <dbReference type="NCBI Taxonomy" id="315456"/>
    <lineage>
        <taxon>Bacteria</taxon>
        <taxon>Pseudomonadati</taxon>
        <taxon>Pseudomonadota</taxon>
        <taxon>Alphaproteobacteria</taxon>
        <taxon>Rickettsiales</taxon>
        <taxon>Rickettsiaceae</taxon>
        <taxon>Rickettsieae</taxon>
        <taxon>Rickettsia</taxon>
        <taxon>spotted fever group</taxon>
    </lineage>
</organism>
<dbReference type="EC" id="3.1.4.4"/>
<dbReference type="EMBL" id="CP000053">
    <property type="protein sequence ID" value="AAY62148.1"/>
    <property type="molecule type" value="Genomic_DNA"/>
</dbReference>
<dbReference type="SMR" id="Q4UJZ1"/>
<dbReference type="STRING" id="315456.RF_1297"/>
<dbReference type="KEGG" id="rfe:RF_1297"/>
<dbReference type="eggNOG" id="COG1502">
    <property type="taxonomic scope" value="Bacteria"/>
</dbReference>
<dbReference type="HOGENOM" id="CLU_080814_3_0_5"/>
<dbReference type="OrthoDB" id="9762009at2"/>
<dbReference type="Proteomes" id="UP000008548">
    <property type="component" value="Chromosome"/>
</dbReference>
<dbReference type="GO" id="GO:0005576">
    <property type="term" value="C:extracellular region"/>
    <property type="evidence" value="ECO:0007669"/>
    <property type="project" value="UniProtKB-SubCell"/>
</dbReference>
<dbReference type="GO" id="GO:0004630">
    <property type="term" value="F:phospholipase D activity"/>
    <property type="evidence" value="ECO:0007669"/>
    <property type="project" value="UniProtKB-EC"/>
</dbReference>
<dbReference type="GO" id="GO:0016891">
    <property type="term" value="F:RNA endonuclease activity, producing 5'-phosphomonoesters"/>
    <property type="evidence" value="ECO:0007669"/>
    <property type="project" value="TreeGrafter"/>
</dbReference>
<dbReference type="GO" id="GO:0016042">
    <property type="term" value="P:lipid catabolic process"/>
    <property type="evidence" value="ECO:0007669"/>
    <property type="project" value="UniProtKB-KW"/>
</dbReference>
<dbReference type="GO" id="GO:0006793">
    <property type="term" value="P:phosphorus metabolic process"/>
    <property type="evidence" value="ECO:0007669"/>
    <property type="project" value="UniProtKB-ARBA"/>
</dbReference>
<dbReference type="CDD" id="cd09170">
    <property type="entry name" value="PLDc_Nuc"/>
    <property type="match status" value="1"/>
</dbReference>
<dbReference type="Gene3D" id="3.30.870.10">
    <property type="entry name" value="Endonuclease Chain A"/>
    <property type="match status" value="1"/>
</dbReference>
<dbReference type="InterPro" id="IPR025202">
    <property type="entry name" value="PLD-like_dom"/>
</dbReference>
<dbReference type="InterPro" id="IPR051406">
    <property type="entry name" value="PLD_domain"/>
</dbReference>
<dbReference type="InterPro" id="IPR001736">
    <property type="entry name" value="PLipase_D/transphosphatidylase"/>
</dbReference>
<dbReference type="PANTHER" id="PTHR43856">
    <property type="entry name" value="CARDIOLIPIN HYDROLASE"/>
    <property type="match status" value="1"/>
</dbReference>
<dbReference type="PANTHER" id="PTHR43856:SF1">
    <property type="entry name" value="MITOCHONDRIAL CARDIOLIPIN HYDROLASE"/>
    <property type="match status" value="1"/>
</dbReference>
<dbReference type="Pfam" id="PF13091">
    <property type="entry name" value="PLDc_2"/>
    <property type="match status" value="1"/>
</dbReference>
<dbReference type="SMART" id="SM00155">
    <property type="entry name" value="PLDc"/>
    <property type="match status" value="1"/>
</dbReference>
<dbReference type="SUPFAM" id="SSF56024">
    <property type="entry name" value="Phospholipase D/nuclease"/>
    <property type="match status" value="1"/>
</dbReference>
<dbReference type="PROSITE" id="PS50035">
    <property type="entry name" value="PLD"/>
    <property type="match status" value="1"/>
</dbReference>
<feature type="signal peptide" evidence="2">
    <location>
        <begin position="1"/>
        <end position="25"/>
    </location>
</feature>
<feature type="chain" id="PRO_0000274783" description="Phospholipase D">
    <location>
        <begin position="26"/>
        <end position="200"/>
    </location>
</feature>
<feature type="domain" description="PLD phosphodiesterase" evidence="3">
    <location>
        <begin position="142"/>
        <end position="169"/>
    </location>
</feature>
<feature type="active site" evidence="3">
    <location>
        <position position="147"/>
    </location>
</feature>
<feature type="active site" evidence="3">
    <location>
        <position position="149"/>
    </location>
</feature>
<feature type="active site" evidence="3">
    <location>
        <position position="154"/>
    </location>
</feature>
<name>PLD_RICFE</name>
<reference key="1">
    <citation type="journal article" date="2005" name="PLoS Biol.">
        <title>The genome sequence of Rickettsia felis identifies the first putative conjugative plasmid in an obligate intracellular parasite.</title>
        <authorList>
            <person name="Ogata H."/>
            <person name="Renesto P."/>
            <person name="Audic S."/>
            <person name="Robert C."/>
            <person name="Blanc G."/>
            <person name="Fournier P.-E."/>
            <person name="Parinello H."/>
            <person name="Claverie J.-M."/>
            <person name="Raoult D."/>
        </authorList>
    </citation>
    <scope>NUCLEOTIDE SEQUENCE [LARGE SCALE GENOMIC DNA]</scope>
    <source>
        <strain>ATCC VR-1525 / URRWXCal2</strain>
    </source>
</reference>
<keyword id="KW-0378">Hydrolase</keyword>
<keyword id="KW-0442">Lipid degradation</keyword>
<keyword id="KW-0443">Lipid metabolism</keyword>
<keyword id="KW-0964">Secreted</keyword>
<keyword id="KW-0732">Signal</keyword>
<keyword id="KW-0843">Virulence</keyword>
<comment type="function">
    <text evidence="1">Could be a virulence factor.</text>
</comment>
<comment type="catalytic activity">
    <reaction>
        <text>a 1,2-diacyl-sn-glycero-3-phosphocholine + H2O = a 1,2-diacyl-sn-glycero-3-phosphate + choline + H(+)</text>
        <dbReference type="Rhea" id="RHEA:14445"/>
        <dbReference type="ChEBI" id="CHEBI:15354"/>
        <dbReference type="ChEBI" id="CHEBI:15377"/>
        <dbReference type="ChEBI" id="CHEBI:15378"/>
        <dbReference type="ChEBI" id="CHEBI:57643"/>
        <dbReference type="ChEBI" id="CHEBI:58608"/>
        <dbReference type="EC" id="3.1.4.4"/>
    </reaction>
</comment>
<comment type="subunit">
    <text evidence="1">Homodimer.</text>
</comment>
<comment type="subcellular location">
    <subcellularLocation>
        <location evidence="4">Secreted</location>
    </subcellularLocation>
</comment>
<comment type="similarity">
    <text evidence="4">Belongs to the phospholipase D family.</text>
</comment>